<protein>
    <recommendedName>
        <fullName evidence="1">NAD(P)H-quinone oxidoreductase subunit J, chloroplastic</fullName>
        <ecNumber evidence="1">7.1.1.-</ecNumber>
    </recommendedName>
    <alternativeName>
        <fullName>NAD(P)H dehydrogenase subunit J</fullName>
    </alternativeName>
    <alternativeName>
        <fullName evidence="1">NADH-plastoquinone oxidoreductase subunit J</fullName>
    </alternativeName>
</protein>
<organism>
    <name type="scientific">Daucus carota</name>
    <name type="common">Wild carrot</name>
    <dbReference type="NCBI Taxonomy" id="4039"/>
    <lineage>
        <taxon>Eukaryota</taxon>
        <taxon>Viridiplantae</taxon>
        <taxon>Streptophyta</taxon>
        <taxon>Embryophyta</taxon>
        <taxon>Tracheophyta</taxon>
        <taxon>Spermatophyta</taxon>
        <taxon>Magnoliopsida</taxon>
        <taxon>eudicotyledons</taxon>
        <taxon>Gunneridae</taxon>
        <taxon>Pentapetalae</taxon>
        <taxon>asterids</taxon>
        <taxon>campanulids</taxon>
        <taxon>Apiales</taxon>
        <taxon>Apiaceae</taxon>
        <taxon>Apioideae</taxon>
        <taxon>Scandiceae</taxon>
        <taxon>Daucinae</taxon>
        <taxon>Daucus</taxon>
        <taxon>Daucus sect. Daucus</taxon>
    </lineage>
</organism>
<sequence length="158" mass="18575">MQGRLSAWLVKHGLIHRSLGFDYQGIETLQIKPEDWHSIAVILYIYGYNYLRSQCAYDVAPGGLLASVYHLTRIEYGVDQPEEVCIKVFSPRKNPRIPSVFWVWKGVDFQERESFDMLGISYDNHPRLKRILMPESWIGWPLRKDYIAPNFYEIQDAH</sequence>
<evidence type="ECO:0000255" key="1">
    <source>
        <dbReference type="HAMAP-Rule" id="MF_01357"/>
    </source>
</evidence>
<geneLocation type="chloroplast"/>
<keyword id="KW-0150">Chloroplast</keyword>
<keyword id="KW-0472">Membrane</keyword>
<keyword id="KW-0520">NAD</keyword>
<keyword id="KW-0521">NADP</keyword>
<keyword id="KW-0934">Plastid</keyword>
<keyword id="KW-0618">Plastoquinone</keyword>
<keyword id="KW-0874">Quinone</keyword>
<keyword id="KW-0793">Thylakoid</keyword>
<keyword id="KW-1278">Translocase</keyword>
<keyword id="KW-0813">Transport</keyword>
<accession>Q0G9V9</accession>
<reference key="1">
    <citation type="journal article" date="2006" name="BMC Genomics">
        <title>Complete plastid genome sequence of Daucus carota: implications for biotechnology and phylogeny of angiosperms.</title>
        <authorList>
            <person name="Ruhlman T."/>
            <person name="Lee S.-B."/>
            <person name="Jansen R.K."/>
            <person name="Hostetler J.B."/>
            <person name="Tallon L.J."/>
            <person name="Town C.D."/>
            <person name="Daniell H."/>
        </authorList>
    </citation>
    <scope>NUCLEOTIDE SEQUENCE [LARGE SCALE GENOMIC DNA]</scope>
    <source>
        <strain>cv. Danvers Half-long</strain>
    </source>
</reference>
<feature type="chain" id="PRO_0000358261" description="NAD(P)H-quinone oxidoreductase subunit J, chloroplastic">
    <location>
        <begin position="1"/>
        <end position="158"/>
    </location>
</feature>
<gene>
    <name evidence="1" type="primary">ndhJ</name>
</gene>
<dbReference type="EC" id="7.1.1.-" evidence="1"/>
<dbReference type="EMBL" id="DQ898156">
    <property type="protein sequence ID" value="ABI32427.1"/>
    <property type="molecule type" value="Genomic_DNA"/>
</dbReference>
<dbReference type="RefSeq" id="YP_740120.1">
    <property type="nucleotide sequence ID" value="NC_008325.1"/>
</dbReference>
<dbReference type="SMR" id="Q0G9V9"/>
<dbReference type="GeneID" id="4266743"/>
<dbReference type="OMA" id="NYLQCQG"/>
<dbReference type="GO" id="GO:0009535">
    <property type="term" value="C:chloroplast thylakoid membrane"/>
    <property type="evidence" value="ECO:0007669"/>
    <property type="project" value="UniProtKB-SubCell"/>
</dbReference>
<dbReference type="GO" id="GO:0008137">
    <property type="term" value="F:NADH dehydrogenase (ubiquinone) activity"/>
    <property type="evidence" value="ECO:0007669"/>
    <property type="project" value="InterPro"/>
</dbReference>
<dbReference type="GO" id="GO:0048038">
    <property type="term" value="F:quinone binding"/>
    <property type="evidence" value="ECO:0007669"/>
    <property type="project" value="UniProtKB-KW"/>
</dbReference>
<dbReference type="GO" id="GO:0019684">
    <property type="term" value="P:photosynthesis, light reaction"/>
    <property type="evidence" value="ECO:0007669"/>
    <property type="project" value="UniProtKB-UniRule"/>
</dbReference>
<dbReference type="FunFam" id="3.30.460.80:FF:000004">
    <property type="entry name" value="NAD(P)H-quinone oxidoreductase subunit J, chloroplastic"/>
    <property type="match status" value="1"/>
</dbReference>
<dbReference type="Gene3D" id="3.30.460.80">
    <property type="entry name" value="NADH:ubiquinone oxidoreductase, 30kDa subunit"/>
    <property type="match status" value="1"/>
</dbReference>
<dbReference type="HAMAP" id="MF_01357">
    <property type="entry name" value="NDH1_NuoC"/>
    <property type="match status" value="1"/>
</dbReference>
<dbReference type="InterPro" id="IPR010218">
    <property type="entry name" value="NADH_DH_suC"/>
</dbReference>
<dbReference type="InterPro" id="IPR037232">
    <property type="entry name" value="NADH_quin_OxRdtase_su_C/D-like"/>
</dbReference>
<dbReference type="InterPro" id="IPR001268">
    <property type="entry name" value="NADH_UbQ_OxRdtase_30kDa_su"/>
</dbReference>
<dbReference type="InterPro" id="IPR020396">
    <property type="entry name" value="NADH_UbQ_OxRdtase_CS"/>
</dbReference>
<dbReference type="NCBIfam" id="NF009141">
    <property type="entry name" value="PRK12494.1"/>
    <property type="match status" value="1"/>
</dbReference>
<dbReference type="PANTHER" id="PTHR10884:SF14">
    <property type="entry name" value="NADH DEHYDROGENASE [UBIQUINONE] IRON-SULFUR PROTEIN 3, MITOCHONDRIAL"/>
    <property type="match status" value="1"/>
</dbReference>
<dbReference type="PANTHER" id="PTHR10884">
    <property type="entry name" value="NADH DEHYDROGENASE UBIQUINONE IRON-SULFUR PROTEIN 3"/>
    <property type="match status" value="1"/>
</dbReference>
<dbReference type="Pfam" id="PF00329">
    <property type="entry name" value="Complex1_30kDa"/>
    <property type="match status" value="1"/>
</dbReference>
<dbReference type="SUPFAM" id="SSF143243">
    <property type="entry name" value="Nqo5-like"/>
    <property type="match status" value="1"/>
</dbReference>
<dbReference type="PROSITE" id="PS00542">
    <property type="entry name" value="COMPLEX1_30K"/>
    <property type="match status" value="1"/>
</dbReference>
<comment type="function">
    <text evidence="1">NDH shuttles electrons from NAD(P)H:plastoquinone, via FMN and iron-sulfur (Fe-S) centers, to quinones in the photosynthetic chain and possibly in a chloroplast respiratory chain. The immediate electron acceptor for the enzyme in this species is believed to be plastoquinone. Couples the redox reaction to proton translocation, and thus conserves the redox energy in a proton gradient.</text>
</comment>
<comment type="catalytic activity">
    <reaction evidence="1">
        <text>a plastoquinone + NADH + (n+1) H(+)(in) = a plastoquinol + NAD(+) + n H(+)(out)</text>
        <dbReference type="Rhea" id="RHEA:42608"/>
        <dbReference type="Rhea" id="RHEA-COMP:9561"/>
        <dbReference type="Rhea" id="RHEA-COMP:9562"/>
        <dbReference type="ChEBI" id="CHEBI:15378"/>
        <dbReference type="ChEBI" id="CHEBI:17757"/>
        <dbReference type="ChEBI" id="CHEBI:57540"/>
        <dbReference type="ChEBI" id="CHEBI:57945"/>
        <dbReference type="ChEBI" id="CHEBI:62192"/>
    </reaction>
</comment>
<comment type="catalytic activity">
    <reaction evidence="1">
        <text>a plastoquinone + NADPH + (n+1) H(+)(in) = a plastoquinol + NADP(+) + n H(+)(out)</text>
        <dbReference type="Rhea" id="RHEA:42612"/>
        <dbReference type="Rhea" id="RHEA-COMP:9561"/>
        <dbReference type="Rhea" id="RHEA-COMP:9562"/>
        <dbReference type="ChEBI" id="CHEBI:15378"/>
        <dbReference type="ChEBI" id="CHEBI:17757"/>
        <dbReference type="ChEBI" id="CHEBI:57783"/>
        <dbReference type="ChEBI" id="CHEBI:58349"/>
        <dbReference type="ChEBI" id="CHEBI:62192"/>
    </reaction>
</comment>
<comment type="subunit">
    <text evidence="1">NDH is composed of at least 16 different subunits, 5 of which are encoded in the nucleus.</text>
</comment>
<comment type="subcellular location">
    <subcellularLocation>
        <location evidence="1">Plastid</location>
        <location evidence="1">Chloroplast thylakoid membrane</location>
        <topology evidence="1">Peripheral membrane protein</topology>
        <orientation evidence="1">Stromal side</orientation>
    </subcellularLocation>
</comment>
<comment type="similarity">
    <text evidence="1">Belongs to the complex I 30 kDa subunit family.</text>
</comment>
<proteinExistence type="inferred from homology"/>
<name>NDHJ_DAUCA</name>